<evidence type="ECO:0000250" key="1">
    <source>
        <dbReference type="UniProtKB" id="Q2JZQ5"/>
    </source>
</evidence>
<evidence type="ECO:0000255" key="2"/>
<evidence type="ECO:0000269" key="3">
    <source>
    </source>
</evidence>
<evidence type="ECO:0000303" key="4">
    <source>
    </source>
</evidence>
<evidence type="ECO:0000305" key="5"/>
<evidence type="ECO:0000305" key="6">
    <source>
    </source>
</evidence>
<evidence type="ECO:0000312" key="7">
    <source>
        <dbReference type="EMBL" id="ACM30318.1"/>
    </source>
</evidence>
<dbReference type="EMBL" id="CP000629">
    <property type="protein sequence ID" value="ACM30318.1"/>
    <property type="molecule type" value="Genomic_DNA"/>
</dbReference>
<dbReference type="RefSeq" id="WP_015917646.1">
    <property type="nucleotide sequence ID" value="NC_011983.1"/>
</dbReference>
<dbReference type="SMR" id="B9JK76"/>
<dbReference type="STRING" id="311403.Arad_9233"/>
<dbReference type="KEGG" id="ara:Arad_9233"/>
<dbReference type="eggNOG" id="COG1879">
    <property type="taxonomic scope" value="Bacteria"/>
</dbReference>
<dbReference type="HOGENOM" id="CLU_037628_3_2_5"/>
<dbReference type="Proteomes" id="UP000001600">
    <property type="component" value="Chromosome 2"/>
</dbReference>
<dbReference type="GO" id="GO:0042597">
    <property type="term" value="C:periplasmic space"/>
    <property type="evidence" value="ECO:0007669"/>
    <property type="project" value="UniProtKB-SubCell"/>
</dbReference>
<dbReference type="GO" id="GO:0030246">
    <property type="term" value="F:carbohydrate binding"/>
    <property type="evidence" value="ECO:0007669"/>
    <property type="project" value="UniProtKB-ARBA"/>
</dbReference>
<dbReference type="CDD" id="cd19967">
    <property type="entry name" value="PBP1_TmRBP-like"/>
    <property type="match status" value="1"/>
</dbReference>
<dbReference type="Gene3D" id="3.40.50.2300">
    <property type="match status" value="2"/>
</dbReference>
<dbReference type="InterPro" id="IPR028082">
    <property type="entry name" value="Peripla_BP_I"/>
</dbReference>
<dbReference type="InterPro" id="IPR025997">
    <property type="entry name" value="SBP_2_dom"/>
</dbReference>
<dbReference type="PANTHER" id="PTHR46847">
    <property type="entry name" value="D-ALLOSE-BINDING PERIPLASMIC PROTEIN-RELATED"/>
    <property type="match status" value="1"/>
</dbReference>
<dbReference type="PANTHER" id="PTHR46847:SF1">
    <property type="entry name" value="D-ALLOSE-BINDING PERIPLASMIC PROTEIN-RELATED"/>
    <property type="match status" value="1"/>
</dbReference>
<dbReference type="Pfam" id="PF13407">
    <property type="entry name" value="Peripla_BP_4"/>
    <property type="match status" value="1"/>
</dbReference>
<dbReference type="SUPFAM" id="SSF53822">
    <property type="entry name" value="Periplasmic binding protein-like I"/>
    <property type="match status" value="1"/>
</dbReference>
<name>APIBP_RHIR8</name>
<reference key="1">
    <citation type="journal article" date="2009" name="J. Bacteriol.">
        <title>Genome sequences of three Agrobacterium biovars help elucidate the evolution of multichromosome genomes in bacteria.</title>
        <authorList>
            <person name="Slater S.C."/>
            <person name="Goldman B.S."/>
            <person name="Goodner B."/>
            <person name="Setubal J.C."/>
            <person name="Farrand S.K."/>
            <person name="Nester E.W."/>
            <person name="Burr T.J."/>
            <person name="Banta L."/>
            <person name="Dickerman A.W."/>
            <person name="Paulsen I."/>
            <person name="Otten L."/>
            <person name="Suen G."/>
            <person name="Welch R."/>
            <person name="Almeida N.F."/>
            <person name="Arnold F."/>
            <person name="Burton O.T."/>
            <person name="Du Z."/>
            <person name="Ewing A."/>
            <person name="Godsy E."/>
            <person name="Heisel S."/>
            <person name="Houmiel K.L."/>
            <person name="Jhaveri J."/>
            <person name="Lu J."/>
            <person name="Miller N.M."/>
            <person name="Norton S."/>
            <person name="Chen Q."/>
            <person name="Phoolcharoen W."/>
            <person name="Ohlin V."/>
            <person name="Ondrusek D."/>
            <person name="Pride N."/>
            <person name="Stricklin S.L."/>
            <person name="Sun J."/>
            <person name="Wheeler C."/>
            <person name="Wilson L."/>
            <person name="Zhu H."/>
            <person name="Wood D.W."/>
        </authorList>
    </citation>
    <scope>NUCLEOTIDE SEQUENCE [LARGE SCALE GENOMIC DNA]</scope>
    <source>
        <strain>K84 / ATCC BAA-868</strain>
    </source>
</reference>
<reference key="2">
    <citation type="journal article" date="2018" name="Nat. Chem. Biol.">
        <title>Functional assignment of multiple catabolic pathways for D-apiose.</title>
        <authorList>
            <person name="Carter M.S."/>
            <person name="Zhang X."/>
            <person name="Huang H."/>
            <person name="Bouvier J.T."/>
            <person name="Francisco B.S."/>
            <person name="Vetting M.W."/>
            <person name="Al-Obaidi N."/>
            <person name="Bonanno J.B."/>
            <person name="Ghosh A."/>
            <person name="Zallot R.G."/>
            <person name="Andersen H.M."/>
            <person name="Almo S.C."/>
            <person name="Gerlt J.A."/>
        </authorList>
    </citation>
    <scope>FUNCTION</scope>
    <scope>DISRUPTION PHENOTYPE</scope>
</reference>
<keyword id="KW-0574">Periplasm</keyword>
<keyword id="KW-0732">Signal</keyword>
<keyword id="KW-0762">Sugar transport</keyword>
<keyword id="KW-0813">Transport</keyword>
<accession>B9JK76</accession>
<sequence length="313" mass="33086">MKLTRRLTLAAFASVLALGTAAPAFSADLIAIITPAHDNPFFKAEAVGAEAKAKELGYDTLVMSHDDDANKQSEVIDTAIGRGAKAIILDNAGADATVAAIKKAKDAGIPSFLIDREINVTGIAVAQIVSNNYQGAQLGAQEFVKLMGEKGNYAELVGREADTNAGIRSQGYHDVIDDYPDLKLVAKQSANWSQTEAYAKMETILQANPDIKGVISGNDTMAMGAIAALQAAGRKDVIVVGFDGSNDVRDSIKAGGIKATVMQPAYAQAQIAVQQADAYIKNKTVPKDEKQLMDCVLINADNADKLETFALKN</sequence>
<gene>
    <name evidence="7" type="ordered locus">Arad_9233</name>
</gene>
<feature type="signal peptide" evidence="2">
    <location>
        <begin position="1"/>
        <end position="26"/>
    </location>
</feature>
<feature type="chain" id="PRO_5002887159" description="D-apiose import binding protein">
    <location>
        <begin position="27"/>
        <end position="313"/>
    </location>
</feature>
<feature type="binding site" evidence="1">
    <location>
        <position position="39"/>
    </location>
    <ligand>
        <name>D-apiofuranose</name>
        <dbReference type="ChEBI" id="CHEBI:141215"/>
    </ligand>
</feature>
<feature type="binding site" evidence="1">
    <location>
        <begin position="115"/>
        <end position="116"/>
    </location>
    <ligand>
        <name>D-apiofuranose</name>
        <dbReference type="ChEBI" id="CHEBI:141215"/>
    </ligand>
</feature>
<feature type="binding site" evidence="1">
    <location>
        <begin position="162"/>
        <end position="164"/>
    </location>
    <ligand>
        <name>D-apiofuranose</name>
        <dbReference type="ChEBI" id="CHEBI:141215"/>
    </ligand>
</feature>
<feature type="binding site" evidence="1">
    <location>
        <position position="168"/>
    </location>
    <ligand>
        <name>D-apiofuranose</name>
        <dbReference type="ChEBI" id="CHEBI:141215"/>
    </ligand>
</feature>
<feature type="binding site" evidence="1">
    <location>
        <position position="218"/>
    </location>
    <ligand>
        <name>D-apiofuranose</name>
        <dbReference type="ChEBI" id="CHEBI:141215"/>
    </ligand>
</feature>
<feature type="binding site" evidence="1">
    <location>
        <position position="243"/>
    </location>
    <ligand>
        <name>D-apiofuranose</name>
        <dbReference type="ChEBI" id="CHEBI:141215"/>
    </ligand>
</feature>
<feature type="binding site" evidence="1">
    <location>
        <position position="263"/>
    </location>
    <ligand>
        <name>D-apiofuranose</name>
        <dbReference type="ChEBI" id="CHEBI:141215"/>
    </ligand>
</feature>
<comment type="function">
    <text evidence="6">Part of an ABC transporter complex involved in D-apiose import.</text>
</comment>
<comment type="subcellular location">
    <subcellularLocation>
        <location evidence="5">Periplasm</location>
    </subcellularLocation>
</comment>
<comment type="disruption phenotype">
    <text evidence="3">Disruption of the gene does not affect growth on D-ribose and D-ribulose as a carbon source but decreases growth with D-apiose.</text>
</comment>
<comment type="similarity">
    <text evidence="5">Belongs to the bacterial solute-binding protein 2 family.</text>
</comment>
<proteinExistence type="inferred from homology"/>
<protein>
    <recommendedName>
        <fullName evidence="5">D-apiose import binding protein</fullName>
    </recommendedName>
    <alternativeName>
        <fullName evidence="4">D-apiose binding SBP</fullName>
    </alternativeName>
</protein>
<organism>
    <name type="scientific">Rhizobium rhizogenes (strain K84 / ATCC BAA-868)</name>
    <name type="common">Agrobacterium radiobacter</name>
    <dbReference type="NCBI Taxonomy" id="311403"/>
    <lineage>
        <taxon>Bacteria</taxon>
        <taxon>Pseudomonadati</taxon>
        <taxon>Pseudomonadota</taxon>
        <taxon>Alphaproteobacteria</taxon>
        <taxon>Hyphomicrobiales</taxon>
        <taxon>Rhizobiaceae</taxon>
        <taxon>Rhizobium/Agrobacterium group</taxon>
        <taxon>Rhizobium</taxon>
    </lineage>
</organism>